<proteinExistence type="inferred from homology"/>
<organism>
    <name type="scientific">Campylobacter fetus subsp. fetus (strain 82-40)</name>
    <dbReference type="NCBI Taxonomy" id="360106"/>
    <lineage>
        <taxon>Bacteria</taxon>
        <taxon>Pseudomonadati</taxon>
        <taxon>Campylobacterota</taxon>
        <taxon>Epsilonproteobacteria</taxon>
        <taxon>Campylobacterales</taxon>
        <taxon>Campylobacteraceae</taxon>
        <taxon>Campylobacter</taxon>
    </lineage>
</organism>
<sequence>MKKVLFLVVALASFAFGADGEQIKAFSVVAAGIGLGVAALGGAIGMGHTAAATILGTARNPGLGGKLLTTMFIALAMIEAQVIYALVIALIALYANPFLG</sequence>
<gene>
    <name evidence="1" type="primary">atpE</name>
    <name type="ordered locus">CFF8240_1281</name>
</gene>
<dbReference type="EMBL" id="CP000487">
    <property type="protein sequence ID" value="ABK82529.1"/>
    <property type="molecule type" value="Genomic_DNA"/>
</dbReference>
<dbReference type="RefSeq" id="WP_002850080.1">
    <property type="nucleotide sequence ID" value="NC_008599.1"/>
</dbReference>
<dbReference type="SMR" id="A0RQF4"/>
<dbReference type="KEGG" id="cff:CFF8240_1281"/>
<dbReference type="eggNOG" id="COG0636">
    <property type="taxonomic scope" value="Bacteria"/>
</dbReference>
<dbReference type="HOGENOM" id="CLU_148047_0_1_7"/>
<dbReference type="Proteomes" id="UP000000760">
    <property type="component" value="Chromosome"/>
</dbReference>
<dbReference type="GO" id="GO:0005886">
    <property type="term" value="C:plasma membrane"/>
    <property type="evidence" value="ECO:0007669"/>
    <property type="project" value="UniProtKB-SubCell"/>
</dbReference>
<dbReference type="GO" id="GO:0045259">
    <property type="term" value="C:proton-transporting ATP synthase complex"/>
    <property type="evidence" value="ECO:0007669"/>
    <property type="project" value="UniProtKB-KW"/>
</dbReference>
<dbReference type="GO" id="GO:0033177">
    <property type="term" value="C:proton-transporting two-sector ATPase complex, proton-transporting domain"/>
    <property type="evidence" value="ECO:0007669"/>
    <property type="project" value="InterPro"/>
</dbReference>
<dbReference type="GO" id="GO:0008289">
    <property type="term" value="F:lipid binding"/>
    <property type="evidence" value="ECO:0007669"/>
    <property type="project" value="UniProtKB-KW"/>
</dbReference>
<dbReference type="GO" id="GO:0046933">
    <property type="term" value="F:proton-transporting ATP synthase activity, rotational mechanism"/>
    <property type="evidence" value="ECO:0007669"/>
    <property type="project" value="UniProtKB-UniRule"/>
</dbReference>
<dbReference type="CDD" id="cd18121">
    <property type="entry name" value="ATP-synt_Fo_c"/>
    <property type="match status" value="1"/>
</dbReference>
<dbReference type="FunFam" id="1.20.20.10:FF:000002">
    <property type="entry name" value="ATP synthase subunit c"/>
    <property type="match status" value="1"/>
</dbReference>
<dbReference type="Gene3D" id="1.20.20.10">
    <property type="entry name" value="F1F0 ATP synthase subunit C"/>
    <property type="match status" value="1"/>
</dbReference>
<dbReference type="HAMAP" id="MF_01396">
    <property type="entry name" value="ATP_synth_c_bact"/>
    <property type="match status" value="1"/>
</dbReference>
<dbReference type="InterPro" id="IPR005953">
    <property type="entry name" value="ATP_synth_csu_bac/chlpt"/>
</dbReference>
<dbReference type="InterPro" id="IPR000454">
    <property type="entry name" value="ATP_synth_F0_csu"/>
</dbReference>
<dbReference type="InterPro" id="IPR020537">
    <property type="entry name" value="ATP_synth_F0_csu_DDCD_BS"/>
</dbReference>
<dbReference type="InterPro" id="IPR038662">
    <property type="entry name" value="ATP_synth_F0_csu_sf"/>
</dbReference>
<dbReference type="InterPro" id="IPR002379">
    <property type="entry name" value="ATPase_proteolipid_c-like_dom"/>
</dbReference>
<dbReference type="InterPro" id="IPR035921">
    <property type="entry name" value="F/V-ATP_Csub_sf"/>
</dbReference>
<dbReference type="NCBIfam" id="TIGR01260">
    <property type="entry name" value="ATP_synt_c"/>
    <property type="match status" value="1"/>
</dbReference>
<dbReference type="NCBIfam" id="NF006295">
    <property type="entry name" value="PRK08482.1"/>
    <property type="match status" value="1"/>
</dbReference>
<dbReference type="Pfam" id="PF00137">
    <property type="entry name" value="ATP-synt_C"/>
    <property type="match status" value="1"/>
</dbReference>
<dbReference type="PRINTS" id="PR00124">
    <property type="entry name" value="ATPASEC"/>
</dbReference>
<dbReference type="SUPFAM" id="SSF81333">
    <property type="entry name" value="F1F0 ATP synthase subunit C"/>
    <property type="match status" value="1"/>
</dbReference>
<dbReference type="PROSITE" id="PS00605">
    <property type="entry name" value="ATPASE_C"/>
    <property type="match status" value="1"/>
</dbReference>
<feature type="chain" id="PRO_0000365857" description="ATP synthase subunit c">
    <location>
        <begin position="1"/>
        <end position="100"/>
    </location>
</feature>
<feature type="transmembrane region" description="Helical" evidence="1">
    <location>
        <begin position="26"/>
        <end position="46"/>
    </location>
</feature>
<feature type="transmembrane region" description="Helical" evidence="1">
    <location>
        <begin position="71"/>
        <end position="91"/>
    </location>
</feature>
<feature type="site" description="Reversibly protonated during proton transport" evidence="1">
    <location>
        <position position="79"/>
    </location>
</feature>
<accession>A0RQF4</accession>
<comment type="function">
    <text evidence="1">F(1)F(0) ATP synthase produces ATP from ADP in the presence of a proton or sodium gradient. F-type ATPases consist of two structural domains, F(1) containing the extramembraneous catalytic core and F(0) containing the membrane proton channel, linked together by a central stalk and a peripheral stalk. During catalysis, ATP synthesis in the catalytic domain of F(1) is coupled via a rotary mechanism of the central stalk subunits to proton translocation.</text>
</comment>
<comment type="function">
    <text evidence="1">Key component of the F(0) channel; it plays a direct role in translocation across the membrane. A homomeric c-ring of between 10-14 subunits forms the central stalk rotor element with the F(1) delta and epsilon subunits.</text>
</comment>
<comment type="subunit">
    <text evidence="1">F-type ATPases have 2 components, F(1) - the catalytic core - and F(0) - the membrane proton channel. F(1) has five subunits: alpha(3), beta(3), gamma(1), delta(1), epsilon(1). F(0) has three main subunits: a(1), b(2) and c(10-14). The alpha and beta chains form an alternating ring which encloses part of the gamma chain. F(1) is attached to F(0) by a central stalk formed by the gamma and epsilon chains, while a peripheral stalk is formed by the delta and b chains.</text>
</comment>
<comment type="subcellular location">
    <subcellularLocation>
        <location evidence="1">Cell inner membrane</location>
        <topology evidence="1">Multi-pass membrane protein</topology>
    </subcellularLocation>
</comment>
<comment type="similarity">
    <text evidence="1">Belongs to the ATPase C chain family.</text>
</comment>
<keyword id="KW-0066">ATP synthesis</keyword>
<keyword id="KW-0997">Cell inner membrane</keyword>
<keyword id="KW-1003">Cell membrane</keyword>
<keyword id="KW-0138">CF(0)</keyword>
<keyword id="KW-0375">Hydrogen ion transport</keyword>
<keyword id="KW-0406">Ion transport</keyword>
<keyword id="KW-0446">Lipid-binding</keyword>
<keyword id="KW-0472">Membrane</keyword>
<keyword id="KW-0812">Transmembrane</keyword>
<keyword id="KW-1133">Transmembrane helix</keyword>
<keyword id="KW-0813">Transport</keyword>
<reference key="1">
    <citation type="submission" date="2006-11" db="EMBL/GenBank/DDBJ databases">
        <title>Sequence of Campylobacter fetus subsp. fetus 82-40.</title>
        <authorList>
            <person name="Fouts D.E."/>
            <person name="Nelson K.E."/>
        </authorList>
    </citation>
    <scope>NUCLEOTIDE SEQUENCE [LARGE SCALE GENOMIC DNA]</scope>
    <source>
        <strain>82-40</strain>
    </source>
</reference>
<protein>
    <recommendedName>
        <fullName evidence="1">ATP synthase subunit c</fullName>
    </recommendedName>
    <alternativeName>
        <fullName evidence="1">ATP synthase F(0) sector subunit c</fullName>
    </alternativeName>
    <alternativeName>
        <fullName evidence="1">F-type ATPase subunit c</fullName>
        <shortName evidence="1">F-ATPase subunit c</shortName>
    </alternativeName>
    <alternativeName>
        <fullName evidence="1">Lipid-binding protein</fullName>
    </alternativeName>
</protein>
<evidence type="ECO:0000255" key="1">
    <source>
        <dbReference type="HAMAP-Rule" id="MF_01396"/>
    </source>
</evidence>
<name>ATPL_CAMFF</name>